<organism>
    <name type="scientific">Oryza sativa subsp. japonica</name>
    <name type="common">Rice</name>
    <dbReference type="NCBI Taxonomy" id="39947"/>
    <lineage>
        <taxon>Eukaryota</taxon>
        <taxon>Viridiplantae</taxon>
        <taxon>Streptophyta</taxon>
        <taxon>Embryophyta</taxon>
        <taxon>Tracheophyta</taxon>
        <taxon>Spermatophyta</taxon>
        <taxon>Magnoliopsida</taxon>
        <taxon>Liliopsida</taxon>
        <taxon>Poales</taxon>
        <taxon>Poaceae</taxon>
        <taxon>BOP clade</taxon>
        <taxon>Oryzoideae</taxon>
        <taxon>Oryzeae</taxon>
        <taxon>Oryzinae</taxon>
        <taxon>Oryza</taxon>
        <taxon>Oryza sativa</taxon>
    </lineage>
</organism>
<accession>Q6ZJU3</accession>
<accession>A0A0P0XG63</accession>
<keyword id="KW-1184">Jasmonic acid signaling pathway</keyword>
<keyword id="KW-0539">Nucleus</keyword>
<keyword id="KW-1185">Reference proteome</keyword>
<keyword id="KW-0804">Transcription</keyword>
<keyword id="KW-0805">Transcription regulation</keyword>
<keyword id="KW-0832">Ubl conjugation</keyword>
<feature type="chain" id="PRO_0000434842" description="Protein TIFY 6a">
    <location>
        <begin position="1"/>
        <end position="427"/>
    </location>
</feature>
<feature type="domain" description="Tify" evidence="3">
    <location>
        <begin position="196"/>
        <end position="231"/>
    </location>
</feature>
<feature type="region of interest" description="Disordered" evidence="5">
    <location>
        <begin position="1"/>
        <end position="32"/>
    </location>
</feature>
<feature type="region of interest" description="Disordered" evidence="5">
    <location>
        <begin position="128"/>
        <end position="154"/>
    </location>
</feature>
<feature type="region of interest" description="Disordered" evidence="5">
    <location>
        <begin position="296"/>
        <end position="327"/>
    </location>
</feature>
<feature type="region of interest" description="Disordered" evidence="5">
    <location>
        <begin position="361"/>
        <end position="427"/>
    </location>
</feature>
<feature type="short sequence motif" description="Jas" evidence="2">
    <location>
        <begin position="343"/>
        <end position="367"/>
    </location>
</feature>
<feature type="short sequence motif" description="Nuclear localization signal" evidence="4">
    <location>
        <begin position="345"/>
        <end position="352"/>
    </location>
</feature>
<feature type="compositionally biased region" description="Basic and acidic residues" evidence="5">
    <location>
        <begin position="1"/>
        <end position="25"/>
    </location>
</feature>
<feature type="compositionally biased region" description="Pro residues" evidence="5">
    <location>
        <begin position="136"/>
        <end position="146"/>
    </location>
</feature>
<feature type="compositionally biased region" description="Polar residues" evidence="5">
    <location>
        <begin position="317"/>
        <end position="327"/>
    </location>
</feature>
<feature type="compositionally biased region" description="Polar residues" evidence="5">
    <location>
        <begin position="369"/>
        <end position="402"/>
    </location>
</feature>
<feature type="compositionally biased region" description="Polar residues" evidence="5">
    <location>
        <begin position="411"/>
        <end position="427"/>
    </location>
</feature>
<evidence type="ECO:0000250" key="1">
    <source>
        <dbReference type="UniProtKB" id="Q7XPM8"/>
    </source>
</evidence>
<evidence type="ECO:0000255" key="2"/>
<evidence type="ECO:0000255" key="3">
    <source>
        <dbReference type="PROSITE-ProRule" id="PRU00650"/>
    </source>
</evidence>
<evidence type="ECO:0000255" key="4">
    <source>
        <dbReference type="PROSITE-ProRule" id="PRU00768"/>
    </source>
</evidence>
<evidence type="ECO:0000256" key="5">
    <source>
        <dbReference type="SAM" id="MobiDB-lite"/>
    </source>
</evidence>
<evidence type="ECO:0000269" key="6">
    <source>
    </source>
</evidence>
<evidence type="ECO:0000269" key="7">
    <source>
    </source>
</evidence>
<evidence type="ECO:0000269" key="8">
    <source>
    </source>
</evidence>
<evidence type="ECO:0000303" key="9">
    <source>
    </source>
</evidence>
<evidence type="ECO:0000303" key="10">
    <source>
    </source>
</evidence>
<evidence type="ECO:0000305" key="11"/>
<evidence type="ECO:0000312" key="12">
    <source>
        <dbReference type="EMBL" id="BAD01195.1"/>
    </source>
</evidence>
<evidence type="ECO:0000312" key="13">
    <source>
        <dbReference type="EMBL" id="BAF23763.1"/>
    </source>
</evidence>
<evidence type="ECO:0000312" key="14">
    <source>
        <dbReference type="EMBL" id="EEE68725.1"/>
    </source>
</evidence>
<sequence length="427" mass="44850">MERDFLGAIWRKEEAAGKPEEHSDYRGGGGGASAAMQWQFPATKVGAASSAFMSFRSSAAAAREEDPKEAAVFDRFSLSGFRPPPRPSPGDAFDGAAAMKQRQFGFNGRQQYAAAAQHGHREQGVDSYGVAAPHHFPSPSPSPRHPVPFGHANPMLRVHSLPNVAGGSPYRNQSFSVGNSVAGSTVGVYGGPRDLQNPKVTQMTIFYDGLVNVFDNIPVEKAQELMLLASRASIPSPPSAARKSDSPISAAAKLTVPEALPARQIVVQKPEASVPLVSGVSNPITIVSQAVTLPKSFSSSNDSAGPKSGGLPLAVTPLSQASPSQPIPVATTNASAIMPRAVPQARKASLARFLEKRKERVSSVAPYPSSKSPLESSDTIGSPSTPSKSSCTDITPSTNNCEDSLCLGQPRNISFSSQEPPSTKLQI</sequence>
<name>TIF6A_ORYSJ</name>
<dbReference type="EMBL" id="HQ858803">
    <property type="protein sequence ID" value="ADX60215.1"/>
    <property type="molecule type" value="mRNA"/>
</dbReference>
<dbReference type="EMBL" id="AP003898">
    <property type="protein sequence ID" value="BAD01195.1"/>
    <property type="molecule type" value="Genomic_DNA"/>
</dbReference>
<dbReference type="EMBL" id="AP008214">
    <property type="protein sequence ID" value="BAF23763.1"/>
    <property type="molecule type" value="Genomic_DNA"/>
</dbReference>
<dbReference type="EMBL" id="AP014964">
    <property type="protein sequence ID" value="BAT05529.1"/>
    <property type="molecule type" value="Genomic_DNA"/>
</dbReference>
<dbReference type="EMBL" id="CM000145">
    <property type="protein sequence ID" value="EEE68725.1"/>
    <property type="molecule type" value="Genomic_DNA"/>
</dbReference>
<dbReference type="RefSeq" id="XP_015651050.1">
    <property type="nucleotide sequence ID" value="XM_015795564.1"/>
</dbReference>
<dbReference type="SMR" id="Q6ZJU3"/>
<dbReference type="FunCoup" id="Q6ZJU3">
    <property type="interactions" value="905"/>
</dbReference>
<dbReference type="STRING" id="39947.Q6ZJU3"/>
<dbReference type="PaxDb" id="39947-Q6ZJU3"/>
<dbReference type="EnsemblPlants" id="Os08t0428400-01">
    <property type="protein sequence ID" value="Os08t0428400-01"/>
    <property type="gene ID" value="Os08g0428400"/>
</dbReference>
<dbReference type="Gramene" id="Os08t0428400-01">
    <property type="protein sequence ID" value="Os08t0428400-01"/>
    <property type="gene ID" value="Os08g0428400"/>
</dbReference>
<dbReference type="KEGG" id="dosa:Os08g0428400"/>
<dbReference type="eggNOG" id="ENOG502QQDB">
    <property type="taxonomic scope" value="Eukaryota"/>
</dbReference>
<dbReference type="HOGENOM" id="CLU_047894_1_0_1"/>
<dbReference type="InParanoid" id="Q6ZJU3"/>
<dbReference type="OMA" id="NPSYKTH"/>
<dbReference type="OrthoDB" id="1939212at2759"/>
<dbReference type="PlantReactome" id="R-OSA-6787011">
    <property type="pathway name" value="Jasmonic acid signaling"/>
</dbReference>
<dbReference type="PlantReactome" id="R-OSA-9826782">
    <property type="pathway name" value="Regulation of seed germination and coleoptile growth under submergence and normal gravity environment"/>
</dbReference>
<dbReference type="Proteomes" id="UP000000763">
    <property type="component" value="Chromosome 8"/>
</dbReference>
<dbReference type="Proteomes" id="UP000007752">
    <property type="component" value="Chromosome 8"/>
</dbReference>
<dbReference type="Proteomes" id="UP000059680">
    <property type="component" value="Chromosome 8"/>
</dbReference>
<dbReference type="ExpressionAtlas" id="Q6ZJU3">
    <property type="expression patterns" value="baseline and differential"/>
</dbReference>
<dbReference type="GO" id="GO:0005634">
    <property type="term" value="C:nucleus"/>
    <property type="evidence" value="ECO:0000318"/>
    <property type="project" value="GO_Central"/>
</dbReference>
<dbReference type="GO" id="GO:0031347">
    <property type="term" value="P:regulation of defense response"/>
    <property type="evidence" value="ECO:0000318"/>
    <property type="project" value="GO_Central"/>
</dbReference>
<dbReference type="GO" id="GO:2000022">
    <property type="term" value="P:regulation of jasmonic acid mediated signaling pathway"/>
    <property type="evidence" value="ECO:0000318"/>
    <property type="project" value="GO_Central"/>
</dbReference>
<dbReference type="GO" id="GO:0009611">
    <property type="term" value="P:response to wounding"/>
    <property type="evidence" value="ECO:0000318"/>
    <property type="project" value="GO_Central"/>
</dbReference>
<dbReference type="InterPro" id="IPR018467">
    <property type="entry name" value="CCT_CS"/>
</dbReference>
<dbReference type="InterPro" id="IPR040390">
    <property type="entry name" value="TIFY/JAZ"/>
</dbReference>
<dbReference type="InterPro" id="IPR010399">
    <property type="entry name" value="Tify_dom"/>
</dbReference>
<dbReference type="PANTHER" id="PTHR33077">
    <property type="entry name" value="PROTEIN TIFY 4A-RELATED-RELATED"/>
    <property type="match status" value="1"/>
</dbReference>
<dbReference type="PANTHER" id="PTHR33077:SF90">
    <property type="entry name" value="PROTEIN TIFY 7"/>
    <property type="match status" value="1"/>
</dbReference>
<dbReference type="Pfam" id="PF09425">
    <property type="entry name" value="Jas_motif"/>
    <property type="match status" value="1"/>
</dbReference>
<dbReference type="Pfam" id="PF06200">
    <property type="entry name" value="tify"/>
    <property type="match status" value="1"/>
</dbReference>
<dbReference type="SMART" id="SM00979">
    <property type="entry name" value="TIFY"/>
    <property type="match status" value="1"/>
</dbReference>
<dbReference type="PROSITE" id="PS51320">
    <property type="entry name" value="TIFY"/>
    <property type="match status" value="1"/>
</dbReference>
<proteinExistence type="evidence at protein level"/>
<comment type="function">
    <text evidence="1">Repressor of jasmonate responses.</text>
</comment>
<comment type="subunit">
    <text evidence="7 8">Interacts with COI1A (PubMed:21332845). Interacts with COI1A and COI1B in a coronatine-dependent manner. Coronatine is an analog of jasmonoyl isoleucine (JA-Ile) (PubMed:23320078).</text>
</comment>
<comment type="subcellular location">
    <subcellularLocation>
        <location evidence="4">Nucleus</location>
    </subcellularLocation>
</comment>
<comment type="induction">
    <text evidence="6 7">By methyl jasmonate (MeJA) (PubMed:21332845). Induced by abscisic acid (ABA), and drought and salt stresses (PubMed:19618278).</text>
</comment>
<comment type="domain">
    <text evidence="1">The jas domain (343-367) is required for interaction with COI1.</text>
</comment>
<comment type="PTM">
    <text evidence="1">Ubiquitinated. Targeted for degradation by the SCF(COI1) E3 ubiquitin ligase-proteasome pathway during jasmonate signaling.</text>
</comment>
<comment type="similarity">
    <text evidence="11">Belongs to the TIFY/JAZ family.</text>
</comment>
<protein>
    <recommendedName>
        <fullName evidence="11">Protein TIFY 6a</fullName>
        <shortName evidence="9">OsTIFY6a</shortName>
    </recommendedName>
    <alternativeName>
        <fullName evidence="11">Jasmonate ZIM domain-containing protein 3</fullName>
        <shortName evidence="9">OsJAZ3</shortName>
    </alternativeName>
    <alternativeName>
        <fullName evidence="10">OsJAZ9</fullName>
    </alternativeName>
</protein>
<gene>
    <name evidence="9" type="primary">TIFY6A</name>
    <name evidence="9" type="synonym">JAZ3</name>
    <name evidence="13" type="ordered locus">Os08g0428400</name>
    <name evidence="11" type="ordered locus">LOC_Os08g33160</name>
    <name evidence="12" type="ORF">OJ1663_D06.22</name>
    <name evidence="14" type="ORF">OsJ_27393</name>
</gene>
<reference key="1">
    <citation type="journal article" date="2009" name="Plant Physiol.">
        <title>GRASSIUS: a platform for comparative regulatory genomics across the grasses.</title>
        <authorList>
            <person name="Yilmaz A."/>
            <person name="Nishiyama M.Y."/>
            <person name="Fuentes B.G."/>
            <person name="Souza G.M."/>
            <person name="Janies D."/>
            <person name="Gray J."/>
            <person name="Grotewold E."/>
        </authorList>
    </citation>
    <scope>NUCLEOTIDE SEQUENCE [MRNA]</scope>
    <source>
        <strain>cv. Nipponbare</strain>
    </source>
</reference>
<reference key="2">
    <citation type="journal article" date="2005" name="Nature">
        <title>The map-based sequence of the rice genome.</title>
        <authorList>
            <consortium name="International rice genome sequencing project (IRGSP)"/>
        </authorList>
    </citation>
    <scope>NUCLEOTIDE SEQUENCE [LARGE SCALE GENOMIC DNA]</scope>
    <source>
        <strain>cv. Nipponbare</strain>
    </source>
</reference>
<reference key="3">
    <citation type="journal article" date="2008" name="Nucleic Acids Res.">
        <title>The rice annotation project database (RAP-DB): 2008 update.</title>
        <authorList>
            <consortium name="The rice annotation project (RAP)"/>
        </authorList>
    </citation>
    <scope>GENOME REANNOTATION</scope>
    <source>
        <strain>cv. Nipponbare</strain>
    </source>
</reference>
<reference key="4">
    <citation type="journal article" date="2013" name="Rice">
        <title>Improvement of the Oryza sativa Nipponbare reference genome using next generation sequence and optical map data.</title>
        <authorList>
            <person name="Kawahara Y."/>
            <person name="de la Bastide M."/>
            <person name="Hamilton J.P."/>
            <person name="Kanamori H."/>
            <person name="McCombie W.R."/>
            <person name="Ouyang S."/>
            <person name="Schwartz D.C."/>
            <person name="Tanaka T."/>
            <person name="Wu J."/>
            <person name="Zhou S."/>
            <person name="Childs K.L."/>
            <person name="Davidson R.M."/>
            <person name="Lin H."/>
            <person name="Quesada-Ocampo L."/>
            <person name="Vaillancourt B."/>
            <person name="Sakai H."/>
            <person name="Lee S.S."/>
            <person name="Kim J."/>
            <person name="Numa H."/>
            <person name="Itoh T."/>
            <person name="Buell C.R."/>
            <person name="Matsumoto T."/>
        </authorList>
    </citation>
    <scope>GENOME REANNOTATION</scope>
    <source>
        <strain>cv. Nipponbare</strain>
    </source>
</reference>
<reference key="5">
    <citation type="journal article" date="2005" name="PLoS Biol.">
        <title>The genomes of Oryza sativa: a history of duplications.</title>
        <authorList>
            <person name="Yu J."/>
            <person name="Wang J."/>
            <person name="Lin W."/>
            <person name="Li S."/>
            <person name="Li H."/>
            <person name="Zhou J."/>
            <person name="Ni P."/>
            <person name="Dong W."/>
            <person name="Hu S."/>
            <person name="Zeng C."/>
            <person name="Zhang J."/>
            <person name="Zhang Y."/>
            <person name="Li R."/>
            <person name="Xu Z."/>
            <person name="Li S."/>
            <person name="Li X."/>
            <person name="Zheng H."/>
            <person name="Cong L."/>
            <person name="Lin L."/>
            <person name="Yin J."/>
            <person name="Geng J."/>
            <person name="Li G."/>
            <person name="Shi J."/>
            <person name="Liu J."/>
            <person name="Lv H."/>
            <person name="Li J."/>
            <person name="Wang J."/>
            <person name="Deng Y."/>
            <person name="Ran L."/>
            <person name="Shi X."/>
            <person name="Wang X."/>
            <person name="Wu Q."/>
            <person name="Li C."/>
            <person name="Ren X."/>
            <person name="Wang J."/>
            <person name="Wang X."/>
            <person name="Li D."/>
            <person name="Liu D."/>
            <person name="Zhang X."/>
            <person name="Ji Z."/>
            <person name="Zhao W."/>
            <person name="Sun Y."/>
            <person name="Zhang Z."/>
            <person name="Bao J."/>
            <person name="Han Y."/>
            <person name="Dong L."/>
            <person name="Ji J."/>
            <person name="Chen P."/>
            <person name="Wu S."/>
            <person name="Liu J."/>
            <person name="Xiao Y."/>
            <person name="Bu D."/>
            <person name="Tan J."/>
            <person name="Yang L."/>
            <person name="Ye C."/>
            <person name="Zhang J."/>
            <person name="Xu J."/>
            <person name="Zhou Y."/>
            <person name="Yu Y."/>
            <person name="Zhang B."/>
            <person name="Zhuang S."/>
            <person name="Wei H."/>
            <person name="Liu B."/>
            <person name="Lei M."/>
            <person name="Yu H."/>
            <person name="Li Y."/>
            <person name="Xu H."/>
            <person name="Wei S."/>
            <person name="He X."/>
            <person name="Fang L."/>
            <person name="Zhang Z."/>
            <person name="Zhang Y."/>
            <person name="Huang X."/>
            <person name="Su Z."/>
            <person name="Tong W."/>
            <person name="Li J."/>
            <person name="Tong Z."/>
            <person name="Li S."/>
            <person name="Ye J."/>
            <person name="Wang L."/>
            <person name="Fang L."/>
            <person name="Lei T."/>
            <person name="Chen C.-S."/>
            <person name="Chen H.-C."/>
            <person name="Xu Z."/>
            <person name="Li H."/>
            <person name="Huang H."/>
            <person name="Zhang F."/>
            <person name="Xu H."/>
            <person name="Li N."/>
            <person name="Zhao C."/>
            <person name="Li S."/>
            <person name="Dong L."/>
            <person name="Huang Y."/>
            <person name="Li L."/>
            <person name="Xi Y."/>
            <person name="Qi Q."/>
            <person name="Li W."/>
            <person name="Zhang B."/>
            <person name="Hu W."/>
            <person name="Zhang Y."/>
            <person name="Tian X."/>
            <person name="Jiao Y."/>
            <person name="Liang X."/>
            <person name="Jin J."/>
            <person name="Gao L."/>
            <person name="Zheng W."/>
            <person name="Hao B."/>
            <person name="Liu S.-M."/>
            <person name="Wang W."/>
            <person name="Yuan L."/>
            <person name="Cao M."/>
            <person name="McDermott J."/>
            <person name="Samudrala R."/>
            <person name="Wang J."/>
            <person name="Wong G.K.-S."/>
            <person name="Yang H."/>
        </authorList>
    </citation>
    <scope>NUCLEOTIDE SEQUENCE [LARGE SCALE GENOMIC DNA]</scope>
    <source>
        <strain>cv. Nipponbare</strain>
    </source>
</reference>
<reference key="6">
    <citation type="journal article" date="2009" name="Plant Mol. Biol.">
        <title>Identification and expression profiling analysis of TIFY family genes involved in stress and phytohormone responses in rice.</title>
        <authorList>
            <person name="Ye H."/>
            <person name="Du H."/>
            <person name="Tang N."/>
            <person name="Li X."/>
            <person name="Xiong L."/>
        </authorList>
    </citation>
    <scope>GENE FAMILY</scope>
    <scope>NOMENCLATURE</scope>
    <scope>INDUCTION</scope>
</reference>
<reference key="7">
    <citation type="journal article" date="2011" name="Plant J.">
        <title>OsbHLH148, a basic helix-loop-helix protein, interacts with OsJAZ proteins in a jasmonate signaling pathway leading to drought tolerance in rice.</title>
        <authorList>
            <person name="Seo J.S."/>
            <person name="Joo J."/>
            <person name="Kim M.J."/>
            <person name="Kim Y.K."/>
            <person name="Nahm B.H."/>
            <person name="Song S.I."/>
            <person name="Cheong J.J."/>
            <person name="Lee J.S."/>
            <person name="Kim J.K."/>
            <person name="Choi Y.D."/>
        </authorList>
    </citation>
    <scope>INTERACTION WITH COI1A</scope>
    <scope>INDUCTION</scope>
</reference>
<reference key="8">
    <citation type="journal article" date="2013" name="PLoS ONE">
        <title>Oryza sativa COI homologues restore jasmonate signal transduction in Arabidopsis coi1-1 mutants.</title>
        <authorList>
            <person name="Lee H.Y."/>
            <person name="Seo J.S."/>
            <person name="Cho J.H."/>
            <person name="Jung H."/>
            <person name="Kim J.K."/>
            <person name="Lee J.S."/>
            <person name="Rhee S."/>
            <person name="Do Choi Y."/>
        </authorList>
    </citation>
    <scope>INTERACTION WITH COI1A AND COI1B</scope>
</reference>